<comment type="function">
    <text evidence="2">Multifunctional protein which displays endonuclease and helicase activities required for initiating and directing viral DNA replication. Also plays a role in viral packaging and transactivation of several promoters. Binds site-specifically to 2-3 approximate tandem copies within the origins of replication (Ori), unwinds this hairpin region and nicks one DNA strand thereby initiating the rolling circle replication (RCR). Cooperatively binds Ori with host PIF and probably other host factors, which activate the nickase function of NS1. Becomes covalently attached to the 5' end of the nick and provides a 3'OH for priming DNA synthesis. The helicase activity unwinds DNA in a 3'-5' direction on the longer strand. Inhibits the host cell cycle during the G1/S transition, the S-phase, and the G2/M transition. These arrests may provide essential cellular factors for viral DNA replication. Promotes apoptosis in host cell.</text>
</comment>
<comment type="catalytic activity">
    <reaction evidence="2">
        <text>ATP + H2O = ADP + phosphate + H(+)</text>
        <dbReference type="Rhea" id="RHEA:13065"/>
        <dbReference type="ChEBI" id="CHEBI:15377"/>
        <dbReference type="ChEBI" id="CHEBI:15378"/>
        <dbReference type="ChEBI" id="CHEBI:30616"/>
        <dbReference type="ChEBI" id="CHEBI:43474"/>
        <dbReference type="ChEBI" id="CHEBI:456216"/>
        <dbReference type="EC" id="3.6.4.12"/>
    </reaction>
</comment>
<comment type="cofactor">
    <cofactor evidence="2">
        <name>Mg(2+)</name>
        <dbReference type="ChEBI" id="CHEBI:18420"/>
    </cofactor>
    <text evidence="2">The endonuclease active site can probably bind other divalent cations.</text>
</comment>
<comment type="subunit">
    <text evidence="3">Homooligomer; when bound to DNA.</text>
</comment>
<comment type="subcellular location">
    <subcellularLocation>
        <location evidence="1">Host nucleus</location>
    </subcellularLocation>
</comment>
<comment type="domain">
    <text evidence="2 3">In the N-terminus, the endonuclease region is involved in binding to the origin of replication. In the middle, there are the ATPase and helicase activities (By similarity). The C-terminus probably contains a transactivation domain (By similarity).</text>
</comment>
<comment type="PTM">
    <text evidence="2">Phosphorylated.</text>
</comment>
<comment type="similarity">
    <text evidence="6">Belongs to the parvoviruses initiator protein NS1 family.</text>
</comment>
<accession>P27438</accession>
<name>NS1_MEVA</name>
<protein>
    <recommendedName>
        <fullName evidence="2">Initiator protein NS1</fullName>
        <shortName>NS1</shortName>
        <ecNumber evidence="3">3.1.21.-</ecNumber>
        <ecNumber evidence="3">3.6.4.12</ecNumber>
    </recommendedName>
    <alternativeName>
        <fullName>NCVP1</fullName>
    </alternativeName>
    <alternativeName>
        <fullName>Non-capsid protein NS-1</fullName>
    </alternativeName>
    <alternativeName>
        <fullName>Non-structural protein 1</fullName>
    </alternativeName>
    <alternativeName>
        <fullName>Non-structural protein NS1</fullName>
    </alternativeName>
</protein>
<keyword id="KW-0067">ATP-binding</keyword>
<keyword id="KW-0190">Covalent protein-DNA linkage</keyword>
<keyword id="KW-0235">DNA replication</keyword>
<keyword id="KW-0238">DNA-binding</keyword>
<keyword id="KW-0255">Endonuclease</keyword>
<keyword id="KW-1078">G1/S host cell cycle checkpoint dysregulation by virus</keyword>
<keyword id="KW-0347">Helicase</keyword>
<keyword id="KW-1079">Host G2/M cell cycle arrest by virus</keyword>
<keyword id="KW-1048">Host nucleus</keyword>
<keyword id="KW-0945">Host-virus interaction</keyword>
<keyword id="KW-0378">Hydrolase</keyword>
<keyword id="KW-0460">Magnesium</keyword>
<keyword id="KW-0479">Metal-binding</keyword>
<keyword id="KW-1119">Modulation of host cell apoptosis by virus</keyword>
<keyword id="KW-1121">Modulation of host cell cycle by virus</keyword>
<keyword id="KW-0540">Nuclease</keyword>
<keyword id="KW-0547">Nucleotide-binding</keyword>
<keyword id="KW-0804">Transcription</keyword>
<keyword id="KW-0805">Transcription regulation</keyword>
<keyword id="KW-1194">Viral DNA replication</keyword>
<keyword id="KW-0231">Viral genome packaging</keyword>
<keyword id="KW-1188">Viral release from host cell</keyword>
<feature type="chain" id="PRO_0000222464" description="Initiator protein NS1">
    <location>
        <begin position="1"/>
        <end position="668"/>
    </location>
</feature>
<feature type="domain" description="PV NS1-Nuc" evidence="5">
    <location>
        <begin position="21"/>
        <end position="260"/>
    </location>
</feature>
<feature type="domain" description="SF3 helicase" evidence="4">
    <location>
        <begin position="367"/>
        <end position="529"/>
    </location>
</feature>
<feature type="region of interest" description="DNA-binding" evidence="2">
    <location>
        <begin position="1"/>
        <end position="277"/>
    </location>
</feature>
<feature type="region of interest" description="Ori-binding" evidence="2">
    <location>
        <begin position="193"/>
        <end position="197"/>
    </location>
</feature>
<feature type="short sequence motif" description="RCR-2" evidence="5">
    <location>
        <begin position="129"/>
        <end position="131"/>
    </location>
</feature>
<feature type="short sequence motif" description="RCR-3" evidence="5">
    <location>
        <begin position="212"/>
        <end position="216"/>
    </location>
</feature>
<feature type="active site" description="For nuclease activity" evidence="5">
    <location>
        <position position="212"/>
    </location>
</feature>
<feature type="binding site" evidence="5">
    <location>
        <position position="121"/>
    </location>
    <ligand>
        <name>a divalent metal cation</name>
        <dbReference type="ChEBI" id="CHEBI:60240"/>
    </ligand>
</feature>
<feature type="binding site" evidence="5">
    <location>
        <position position="129"/>
    </location>
    <ligand>
        <name>a divalent metal cation</name>
        <dbReference type="ChEBI" id="CHEBI:60240"/>
    </ligand>
</feature>
<feature type="binding site" evidence="5">
    <location>
        <position position="131"/>
    </location>
    <ligand>
        <name>a divalent metal cation</name>
        <dbReference type="ChEBI" id="CHEBI:60240"/>
    </ligand>
</feature>
<feature type="binding site" evidence="4">
    <location>
        <begin position="400"/>
        <end position="407"/>
    </location>
    <ligand>
        <name>ATP</name>
        <dbReference type="ChEBI" id="CHEBI:30616"/>
    </ligand>
</feature>
<dbReference type="EC" id="3.1.21.-" evidence="3"/>
<dbReference type="EC" id="3.6.4.12" evidence="3"/>
<dbReference type="EMBL" id="D00765">
    <property type="protein sequence ID" value="BAA00662.1"/>
    <property type="molecule type" value="Genomic_DNA"/>
</dbReference>
<dbReference type="PIR" id="A38350">
    <property type="entry name" value="UYPVME"/>
</dbReference>
<dbReference type="SMR" id="P27438"/>
<dbReference type="Proteomes" id="UP000007717">
    <property type="component" value="Genome"/>
</dbReference>
<dbReference type="GO" id="GO:0042025">
    <property type="term" value="C:host cell nucleus"/>
    <property type="evidence" value="ECO:0007669"/>
    <property type="project" value="UniProtKB-SubCell"/>
</dbReference>
<dbReference type="GO" id="GO:0005524">
    <property type="term" value="F:ATP binding"/>
    <property type="evidence" value="ECO:0007669"/>
    <property type="project" value="UniProtKB-KW"/>
</dbReference>
<dbReference type="GO" id="GO:0016887">
    <property type="term" value="F:ATP hydrolysis activity"/>
    <property type="evidence" value="ECO:0007669"/>
    <property type="project" value="RHEA"/>
</dbReference>
<dbReference type="GO" id="GO:0003677">
    <property type="term" value="F:DNA binding"/>
    <property type="evidence" value="ECO:0007669"/>
    <property type="project" value="UniProtKB-KW"/>
</dbReference>
<dbReference type="GO" id="GO:0004519">
    <property type="term" value="F:endonuclease activity"/>
    <property type="evidence" value="ECO:0007669"/>
    <property type="project" value="UniProtKB-KW"/>
</dbReference>
<dbReference type="GO" id="GO:0004386">
    <property type="term" value="F:helicase activity"/>
    <property type="evidence" value="ECO:0007669"/>
    <property type="project" value="UniProtKB-KW"/>
</dbReference>
<dbReference type="GO" id="GO:0046872">
    <property type="term" value="F:metal ion binding"/>
    <property type="evidence" value="ECO:0007669"/>
    <property type="project" value="UniProtKB-KW"/>
</dbReference>
<dbReference type="GO" id="GO:0006260">
    <property type="term" value="P:DNA replication"/>
    <property type="evidence" value="ECO:0007669"/>
    <property type="project" value="UniProtKB-KW"/>
</dbReference>
<dbReference type="GO" id="GO:0039592">
    <property type="term" value="P:symbiont-mediated arrest of host cell cycle during G2/M transition"/>
    <property type="evidence" value="ECO:0007669"/>
    <property type="project" value="UniProtKB-KW"/>
</dbReference>
<dbReference type="GO" id="GO:0052150">
    <property type="term" value="P:symbiont-mediated perturbation of host apoptosis"/>
    <property type="evidence" value="ECO:0007669"/>
    <property type="project" value="UniProtKB-KW"/>
</dbReference>
<dbReference type="GO" id="GO:0039645">
    <property type="term" value="P:symbiont-mediated perturbation of host cell cycle G1/S transition checkpoint"/>
    <property type="evidence" value="ECO:0007669"/>
    <property type="project" value="UniProtKB-KW"/>
</dbReference>
<dbReference type="GO" id="GO:0039693">
    <property type="term" value="P:viral DNA genome replication"/>
    <property type="evidence" value="ECO:0007669"/>
    <property type="project" value="UniProtKB-KW"/>
</dbReference>
<dbReference type="Gene3D" id="3.40.1310.20">
    <property type="match status" value="1"/>
</dbReference>
<dbReference type="Gene3D" id="3.40.50.300">
    <property type="entry name" value="P-loop containing nucleotide triphosphate hydrolases"/>
    <property type="match status" value="1"/>
</dbReference>
<dbReference type="InterPro" id="IPR014015">
    <property type="entry name" value="Helicase_SF3_DNA-vir"/>
</dbReference>
<dbReference type="InterPro" id="IPR027417">
    <property type="entry name" value="P-loop_NTPase"/>
</dbReference>
<dbReference type="InterPro" id="IPR021972">
    <property type="entry name" value="Parvovirus_NS1_C"/>
</dbReference>
<dbReference type="InterPro" id="IPR001257">
    <property type="entry name" value="Parvovirus_NS1_helicase"/>
</dbReference>
<dbReference type="InterPro" id="IPR021076">
    <property type="entry name" value="Parvovirus_NS1_N"/>
</dbReference>
<dbReference type="InterPro" id="IPR049901">
    <property type="entry name" value="PV_NS1-NUC"/>
</dbReference>
<dbReference type="Pfam" id="PF12117">
    <property type="entry name" value="NS1_C"/>
    <property type="match status" value="1"/>
</dbReference>
<dbReference type="Pfam" id="PF01057">
    <property type="entry name" value="Parvo_NS1"/>
    <property type="match status" value="1"/>
</dbReference>
<dbReference type="Pfam" id="PF12433">
    <property type="entry name" value="PV_NSP1"/>
    <property type="match status" value="1"/>
</dbReference>
<dbReference type="SUPFAM" id="SSF55464">
    <property type="entry name" value="Origin of replication-binding domain, RBD-like"/>
    <property type="match status" value="1"/>
</dbReference>
<dbReference type="SUPFAM" id="SSF52540">
    <property type="entry name" value="P-loop containing nucleoside triphosphate hydrolases"/>
    <property type="match status" value="1"/>
</dbReference>
<dbReference type="PROSITE" id="PS52022">
    <property type="entry name" value="PV_NS1_NUC"/>
    <property type="match status" value="1"/>
</dbReference>
<dbReference type="PROSITE" id="PS51206">
    <property type="entry name" value="SF3_HELICASE_1"/>
    <property type="match status" value="1"/>
</dbReference>
<sequence>MSGNQYTEEVMEGVNWLKKHAENEAFSFVFKCDNVQLNGKDVHWNNYTKPIQNEELTSLIRGAQTAMDQTEEEEMDWESEVDSLAKKQVQTFDALIKKCLFEVFVSKNIEPNECVWFIQHEWGKDQGWHCHVLLHSKNLQQATGKWLRRQMNMYWSRWLVTLCSVNLTPTEKIKLREIAEDSEWVTILTYRHKQTKKDYVKMVHFGNMIAYYFLTKKKIVHMTKESGYFLSTDSGWKFNFMKYQDRHTVSTLYTEQMKPETVETTVTTAQETKRGRIQTKKEVSIKCTLRDLVSKRVTSPEDWMMLQPDSYIEMMAQPGGENLLKNTLEICTLTLARTKTAFELILEKANNTKLTNFDLANSRTCQIFRMHGWNWIKVCHAIACVLNRQGGKRNTVLFHGPASTGKSIIAQAIAQAVGNVGCYNAANVNFPFNDCTNKNLIWIEEAGNFGQQVNQFKAICSGQTIRIDQKGKGSKQIEPTPVIMTTNENITIVRIGCEERPEHTQPIRDRMLNIKLVCKLPGDFGLVDKEEWPLICAWLVKHGYESTMANYTHHWGKVPEWDENWAEPKIQEGVNSPGCKDLETQAASNPQSQDHVLTPLTPDVVDLALEPWSTPDTPIAETANQQSNQLGVTHKDVQASPTWSEIEADLRAIFTSEQLEEDFRDDLD</sequence>
<organismHost>
    <name type="scientific">Neovison vison</name>
    <name type="common">American mink</name>
    <name type="synonym">Mustela vison</name>
    <dbReference type="NCBI Taxonomy" id="452646"/>
</organismHost>
<evidence type="ECO:0000250" key="1">
    <source>
        <dbReference type="UniProtKB" id="D0EZM8"/>
    </source>
</evidence>
<evidence type="ECO:0000250" key="2">
    <source>
        <dbReference type="UniProtKB" id="P03134"/>
    </source>
</evidence>
<evidence type="ECO:0000250" key="3">
    <source>
        <dbReference type="UniProtKB" id="Q9PZT1"/>
    </source>
</evidence>
<evidence type="ECO:0000255" key="4">
    <source>
        <dbReference type="PROSITE-ProRule" id="PRU00551"/>
    </source>
</evidence>
<evidence type="ECO:0000255" key="5">
    <source>
        <dbReference type="PROSITE-ProRule" id="PRU01366"/>
    </source>
</evidence>
<evidence type="ECO:0000305" key="6"/>
<organism>
    <name type="scientific">Mink enteritis virus (strain Abashiri)</name>
    <name type="common">MEV</name>
    <dbReference type="NCBI Taxonomy" id="10793"/>
    <lineage>
        <taxon>Viruses</taxon>
        <taxon>Monodnaviria</taxon>
        <taxon>Shotokuvirae</taxon>
        <taxon>Cossaviricota</taxon>
        <taxon>Quintoviricetes</taxon>
        <taxon>Piccovirales</taxon>
        <taxon>Parvoviridae</taxon>
        <taxon>Parvovirinae</taxon>
        <taxon>Protoparvovirus</taxon>
        <taxon>Protoparvovirus carnivoran1</taxon>
    </lineage>
</organism>
<gene>
    <name type="primary">NS1</name>
</gene>
<reference key="1">
    <citation type="journal article" date="1991" name="J. Gen. Virol.">
        <title>Construction and nucleotide sequence analysis of an infectious DNA clone of the autonomous parvovirus, mink enteritis virus.</title>
        <authorList>
            <person name="Kariatsumari T."/>
            <person name="Horiuchi M."/>
            <person name="Hama E."/>
            <person name="Yaguchi K."/>
            <person name="Ishigurio N."/>
            <person name="Goto H."/>
            <person name="Shinagawa M."/>
        </authorList>
    </citation>
    <scope>NUCLEOTIDE SEQUENCE [GENOMIC DNA]</scope>
</reference>
<proteinExistence type="inferred from homology"/>